<proteinExistence type="inferred from homology"/>
<name>ARGD_HAEDU</name>
<gene>
    <name evidence="1" type="primary">argD</name>
    <name type="ordered locus">HD_0892</name>
</gene>
<feature type="chain" id="PRO_0000112747" description="Acetylornithine aminotransferase">
    <location>
        <begin position="1"/>
        <end position="393"/>
    </location>
</feature>
<feature type="binding site" evidence="1">
    <location>
        <begin position="105"/>
        <end position="106"/>
    </location>
    <ligand>
        <name>pyridoxal 5'-phosphate</name>
        <dbReference type="ChEBI" id="CHEBI:597326"/>
    </ligand>
</feature>
<feature type="binding site" evidence="1">
    <location>
        <position position="138"/>
    </location>
    <ligand>
        <name>pyridoxal 5'-phosphate</name>
        <dbReference type="ChEBI" id="CHEBI:597326"/>
    </ligand>
</feature>
<feature type="binding site" evidence="1">
    <location>
        <position position="141"/>
    </location>
    <ligand>
        <name>N(2)-acetyl-L-ornithine</name>
        <dbReference type="ChEBI" id="CHEBI:57805"/>
    </ligand>
</feature>
<feature type="binding site" evidence="1">
    <location>
        <begin position="224"/>
        <end position="227"/>
    </location>
    <ligand>
        <name>pyridoxal 5'-phosphate</name>
        <dbReference type="ChEBI" id="CHEBI:597326"/>
    </ligand>
</feature>
<feature type="binding site" evidence="1">
    <location>
        <position position="281"/>
    </location>
    <ligand>
        <name>N(2)-acetyl-L-ornithine</name>
        <dbReference type="ChEBI" id="CHEBI:57805"/>
    </ligand>
</feature>
<feature type="binding site" evidence="1">
    <location>
        <position position="282"/>
    </location>
    <ligand>
        <name>pyridoxal 5'-phosphate</name>
        <dbReference type="ChEBI" id="CHEBI:597326"/>
    </ligand>
</feature>
<feature type="modified residue" description="N6-(pyridoxal phosphate)lysine" evidence="1">
    <location>
        <position position="253"/>
    </location>
</feature>
<accession>Q7VMS5</accession>
<reference key="1">
    <citation type="submission" date="2003-06" db="EMBL/GenBank/DDBJ databases">
        <title>The complete genome sequence of Haemophilus ducreyi.</title>
        <authorList>
            <person name="Munson R.S. Jr."/>
            <person name="Ray W.C."/>
            <person name="Mahairas G."/>
            <person name="Sabo P."/>
            <person name="Mungur R."/>
            <person name="Johnson L."/>
            <person name="Nguyen D."/>
            <person name="Wang J."/>
            <person name="Forst C."/>
            <person name="Hood L."/>
        </authorList>
    </citation>
    <scope>NUCLEOTIDE SEQUENCE [LARGE SCALE GENOMIC DNA]</scope>
    <source>
        <strain>35000HP / ATCC 700724</strain>
    </source>
</reference>
<keyword id="KW-0028">Amino-acid biosynthesis</keyword>
<keyword id="KW-0032">Aminotransferase</keyword>
<keyword id="KW-0055">Arginine biosynthesis</keyword>
<keyword id="KW-0963">Cytoplasm</keyword>
<keyword id="KW-0663">Pyridoxal phosphate</keyword>
<keyword id="KW-1185">Reference proteome</keyword>
<keyword id="KW-0808">Transferase</keyword>
<protein>
    <recommendedName>
        <fullName evidence="1">Acetylornithine aminotransferase</fullName>
        <shortName evidence="1">ACOAT</shortName>
        <ecNumber evidence="1">2.6.1.11</ecNumber>
    </recommendedName>
</protein>
<sequence length="393" mass="42747">MTSDQIKQLDANYIAQTYAKFDLALSHGQGCEVWDFDGNKYLDFTSGIGVNSLGWADPDWLEAVIAQLHKLSHTSNLFYTEPSARLAKHLVQVSGLKRVFFANSGAEANEGAIKVARKYSHDKYGDTRSTIISLVNSFHGRTISTLAATGQKLFHQHFFPFTAGFEHLIANDLNAFKTRIAQNDICAIILEVVQGEGGVCSLDQAYLQAVQGLCQVQDILLIIDEVQTGIGRTGTMFAYQQFELKPDIVTLAKGLAGGLPIGAFLLADKVAETLAKGDHGSTFGANPVSCAAANAVLTKLEPLFLTEVMRKGQKLRKALQSLPHVKSISGLGLMIGVEFDEHINVADVVTNCLKQGVLFLTAKTKLRMLPPLIINDEQLERGVTVLAQVLSEM</sequence>
<dbReference type="EC" id="2.6.1.11" evidence="1"/>
<dbReference type="EMBL" id="AE017143">
    <property type="protein sequence ID" value="AAP95778.1"/>
    <property type="status" value="ALT_INIT"/>
    <property type="molecule type" value="Genomic_DNA"/>
</dbReference>
<dbReference type="RefSeq" id="WP_041603433.1">
    <property type="nucleotide sequence ID" value="NC_002940.2"/>
</dbReference>
<dbReference type="SMR" id="Q7VMS5"/>
<dbReference type="STRING" id="233412.HD_0892"/>
<dbReference type="KEGG" id="hdu:HD_0892"/>
<dbReference type="eggNOG" id="COG4992">
    <property type="taxonomic scope" value="Bacteria"/>
</dbReference>
<dbReference type="HOGENOM" id="CLU_016922_10_1_6"/>
<dbReference type="OrthoDB" id="9801052at2"/>
<dbReference type="UniPathway" id="UPA00068">
    <property type="reaction ID" value="UER00109"/>
</dbReference>
<dbReference type="Proteomes" id="UP000001022">
    <property type="component" value="Chromosome"/>
</dbReference>
<dbReference type="GO" id="GO:0005737">
    <property type="term" value="C:cytoplasm"/>
    <property type="evidence" value="ECO:0007669"/>
    <property type="project" value="UniProtKB-SubCell"/>
</dbReference>
<dbReference type="GO" id="GO:0042802">
    <property type="term" value="F:identical protein binding"/>
    <property type="evidence" value="ECO:0007669"/>
    <property type="project" value="TreeGrafter"/>
</dbReference>
<dbReference type="GO" id="GO:0003992">
    <property type="term" value="F:N2-acetyl-L-ornithine:2-oxoglutarate 5-aminotransferase activity"/>
    <property type="evidence" value="ECO:0007669"/>
    <property type="project" value="UniProtKB-UniRule"/>
</dbReference>
<dbReference type="GO" id="GO:0030170">
    <property type="term" value="F:pyridoxal phosphate binding"/>
    <property type="evidence" value="ECO:0007669"/>
    <property type="project" value="InterPro"/>
</dbReference>
<dbReference type="GO" id="GO:0006526">
    <property type="term" value="P:L-arginine biosynthetic process"/>
    <property type="evidence" value="ECO:0007669"/>
    <property type="project" value="UniProtKB-UniRule"/>
</dbReference>
<dbReference type="CDD" id="cd00610">
    <property type="entry name" value="OAT_like"/>
    <property type="match status" value="1"/>
</dbReference>
<dbReference type="FunFam" id="3.40.640.10:FF:000004">
    <property type="entry name" value="Acetylornithine aminotransferase"/>
    <property type="match status" value="1"/>
</dbReference>
<dbReference type="Gene3D" id="3.90.1150.10">
    <property type="entry name" value="Aspartate Aminotransferase, domain 1"/>
    <property type="match status" value="1"/>
</dbReference>
<dbReference type="Gene3D" id="3.40.640.10">
    <property type="entry name" value="Type I PLP-dependent aspartate aminotransferase-like (Major domain)"/>
    <property type="match status" value="1"/>
</dbReference>
<dbReference type="HAMAP" id="MF_01107">
    <property type="entry name" value="ArgD_aminotrans_3"/>
    <property type="match status" value="1"/>
</dbReference>
<dbReference type="InterPro" id="IPR004636">
    <property type="entry name" value="AcOrn/SuccOrn_fam"/>
</dbReference>
<dbReference type="InterPro" id="IPR005814">
    <property type="entry name" value="Aminotrans_3"/>
</dbReference>
<dbReference type="InterPro" id="IPR049704">
    <property type="entry name" value="Aminotrans_3_PPA_site"/>
</dbReference>
<dbReference type="InterPro" id="IPR050103">
    <property type="entry name" value="Class-III_PLP-dep_AT"/>
</dbReference>
<dbReference type="InterPro" id="IPR015424">
    <property type="entry name" value="PyrdxlP-dep_Trfase"/>
</dbReference>
<dbReference type="InterPro" id="IPR015421">
    <property type="entry name" value="PyrdxlP-dep_Trfase_major"/>
</dbReference>
<dbReference type="InterPro" id="IPR015422">
    <property type="entry name" value="PyrdxlP-dep_Trfase_small"/>
</dbReference>
<dbReference type="NCBIfam" id="TIGR00707">
    <property type="entry name" value="argD"/>
    <property type="match status" value="1"/>
</dbReference>
<dbReference type="NCBIfam" id="NF002325">
    <property type="entry name" value="PRK01278.1"/>
    <property type="match status" value="1"/>
</dbReference>
<dbReference type="PANTHER" id="PTHR11986:SF79">
    <property type="entry name" value="ACETYLORNITHINE AMINOTRANSFERASE, MITOCHONDRIAL"/>
    <property type="match status" value="1"/>
</dbReference>
<dbReference type="PANTHER" id="PTHR11986">
    <property type="entry name" value="AMINOTRANSFERASE CLASS III"/>
    <property type="match status" value="1"/>
</dbReference>
<dbReference type="Pfam" id="PF00202">
    <property type="entry name" value="Aminotran_3"/>
    <property type="match status" value="1"/>
</dbReference>
<dbReference type="PIRSF" id="PIRSF000521">
    <property type="entry name" value="Transaminase_4ab_Lys_Orn"/>
    <property type="match status" value="1"/>
</dbReference>
<dbReference type="SUPFAM" id="SSF53383">
    <property type="entry name" value="PLP-dependent transferases"/>
    <property type="match status" value="1"/>
</dbReference>
<dbReference type="PROSITE" id="PS00600">
    <property type="entry name" value="AA_TRANSFER_CLASS_3"/>
    <property type="match status" value="1"/>
</dbReference>
<organism>
    <name type="scientific">Haemophilus ducreyi (strain 35000HP / ATCC 700724)</name>
    <dbReference type="NCBI Taxonomy" id="233412"/>
    <lineage>
        <taxon>Bacteria</taxon>
        <taxon>Pseudomonadati</taxon>
        <taxon>Pseudomonadota</taxon>
        <taxon>Gammaproteobacteria</taxon>
        <taxon>Pasteurellales</taxon>
        <taxon>Pasteurellaceae</taxon>
        <taxon>Haemophilus</taxon>
    </lineage>
</organism>
<comment type="catalytic activity">
    <reaction evidence="1">
        <text>N(2)-acetyl-L-ornithine + 2-oxoglutarate = N-acetyl-L-glutamate 5-semialdehyde + L-glutamate</text>
        <dbReference type="Rhea" id="RHEA:18049"/>
        <dbReference type="ChEBI" id="CHEBI:16810"/>
        <dbReference type="ChEBI" id="CHEBI:29123"/>
        <dbReference type="ChEBI" id="CHEBI:29985"/>
        <dbReference type="ChEBI" id="CHEBI:57805"/>
        <dbReference type="EC" id="2.6.1.11"/>
    </reaction>
</comment>
<comment type="cofactor">
    <cofactor evidence="1">
        <name>pyridoxal 5'-phosphate</name>
        <dbReference type="ChEBI" id="CHEBI:597326"/>
    </cofactor>
    <text evidence="1">Binds 1 pyridoxal phosphate per subunit.</text>
</comment>
<comment type="pathway">
    <text evidence="1">Amino-acid biosynthesis; L-arginine biosynthesis; N(2)-acetyl-L-ornithine from L-glutamate: step 4/4.</text>
</comment>
<comment type="subunit">
    <text evidence="1">Homodimer.</text>
</comment>
<comment type="subcellular location">
    <subcellularLocation>
        <location evidence="1">Cytoplasm</location>
    </subcellularLocation>
</comment>
<comment type="miscellaneous">
    <text evidence="1">May also have succinyldiaminopimelate aminotransferase activity, thus carrying out the corresponding step in lysine biosynthesis.</text>
</comment>
<comment type="similarity">
    <text evidence="1">Belongs to the class-III pyridoxal-phosphate-dependent aminotransferase family. ArgD subfamily.</text>
</comment>
<comment type="sequence caution" evidence="2">
    <conflict type="erroneous initiation">
        <sequence resource="EMBL-CDS" id="AAP95778"/>
    </conflict>
</comment>
<evidence type="ECO:0000255" key="1">
    <source>
        <dbReference type="HAMAP-Rule" id="MF_01107"/>
    </source>
</evidence>
<evidence type="ECO:0000305" key="2"/>